<name>TAGB_BACSU</name>
<organism>
    <name type="scientific">Bacillus subtilis (strain 168)</name>
    <dbReference type="NCBI Taxonomy" id="224308"/>
    <lineage>
        <taxon>Bacteria</taxon>
        <taxon>Bacillati</taxon>
        <taxon>Bacillota</taxon>
        <taxon>Bacilli</taxon>
        <taxon>Bacillales</taxon>
        <taxon>Bacillaceae</taxon>
        <taxon>Bacillus</taxon>
    </lineage>
</organism>
<reference key="1">
    <citation type="journal article" date="1991" name="J. Gen. Microbiol.">
        <title>Genes concerned with synthesis of poly(glycerol phosphate), the essential teichoic acid in Bacillus subtilis strain 168, are organized in two divergent transcription units.</title>
        <authorList>
            <person name="Maueel C."/>
            <person name="Young M."/>
            <person name="Karamata D."/>
        </authorList>
    </citation>
    <scope>NUCLEOTIDE SEQUENCE [GENOMIC DNA]</scope>
    <source>
        <strain>168</strain>
    </source>
</reference>
<reference key="2">
    <citation type="journal article" date="1997" name="Nature">
        <title>The complete genome sequence of the Gram-positive bacterium Bacillus subtilis.</title>
        <authorList>
            <person name="Kunst F."/>
            <person name="Ogasawara N."/>
            <person name="Moszer I."/>
            <person name="Albertini A.M."/>
            <person name="Alloni G."/>
            <person name="Azevedo V."/>
            <person name="Bertero M.G."/>
            <person name="Bessieres P."/>
            <person name="Bolotin A."/>
            <person name="Borchert S."/>
            <person name="Borriss R."/>
            <person name="Boursier L."/>
            <person name="Brans A."/>
            <person name="Braun M."/>
            <person name="Brignell S.C."/>
            <person name="Bron S."/>
            <person name="Brouillet S."/>
            <person name="Bruschi C.V."/>
            <person name="Caldwell B."/>
            <person name="Capuano V."/>
            <person name="Carter N.M."/>
            <person name="Choi S.-K."/>
            <person name="Codani J.-J."/>
            <person name="Connerton I.F."/>
            <person name="Cummings N.J."/>
            <person name="Daniel R.A."/>
            <person name="Denizot F."/>
            <person name="Devine K.M."/>
            <person name="Duesterhoeft A."/>
            <person name="Ehrlich S.D."/>
            <person name="Emmerson P.T."/>
            <person name="Entian K.-D."/>
            <person name="Errington J."/>
            <person name="Fabret C."/>
            <person name="Ferrari E."/>
            <person name="Foulger D."/>
            <person name="Fritz C."/>
            <person name="Fujita M."/>
            <person name="Fujita Y."/>
            <person name="Fuma S."/>
            <person name="Galizzi A."/>
            <person name="Galleron N."/>
            <person name="Ghim S.-Y."/>
            <person name="Glaser P."/>
            <person name="Goffeau A."/>
            <person name="Golightly E.J."/>
            <person name="Grandi G."/>
            <person name="Guiseppi G."/>
            <person name="Guy B.J."/>
            <person name="Haga K."/>
            <person name="Haiech J."/>
            <person name="Harwood C.R."/>
            <person name="Henaut A."/>
            <person name="Hilbert H."/>
            <person name="Holsappel S."/>
            <person name="Hosono S."/>
            <person name="Hullo M.-F."/>
            <person name="Itaya M."/>
            <person name="Jones L.-M."/>
            <person name="Joris B."/>
            <person name="Karamata D."/>
            <person name="Kasahara Y."/>
            <person name="Klaerr-Blanchard M."/>
            <person name="Klein C."/>
            <person name="Kobayashi Y."/>
            <person name="Koetter P."/>
            <person name="Koningstein G."/>
            <person name="Krogh S."/>
            <person name="Kumano M."/>
            <person name="Kurita K."/>
            <person name="Lapidus A."/>
            <person name="Lardinois S."/>
            <person name="Lauber J."/>
            <person name="Lazarevic V."/>
            <person name="Lee S.-M."/>
            <person name="Levine A."/>
            <person name="Liu H."/>
            <person name="Masuda S."/>
            <person name="Mauel C."/>
            <person name="Medigue C."/>
            <person name="Medina N."/>
            <person name="Mellado R.P."/>
            <person name="Mizuno M."/>
            <person name="Moestl D."/>
            <person name="Nakai S."/>
            <person name="Noback M."/>
            <person name="Noone D."/>
            <person name="O'Reilly M."/>
            <person name="Ogawa K."/>
            <person name="Ogiwara A."/>
            <person name="Oudega B."/>
            <person name="Park S.-H."/>
            <person name="Parro V."/>
            <person name="Pohl T.M."/>
            <person name="Portetelle D."/>
            <person name="Porwollik S."/>
            <person name="Prescott A.M."/>
            <person name="Presecan E."/>
            <person name="Pujic P."/>
            <person name="Purnelle B."/>
            <person name="Rapoport G."/>
            <person name="Rey M."/>
            <person name="Reynolds S."/>
            <person name="Rieger M."/>
            <person name="Rivolta C."/>
            <person name="Rocha E."/>
            <person name="Roche B."/>
            <person name="Rose M."/>
            <person name="Sadaie Y."/>
            <person name="Sato T."/>
            <person name="Scanlan E."/>
            <person name="Schleich S."/>
            <person name="Schroeter R."/>
            <person name="Scoffone F."/>
            <person name="Sekiguchi J."/>
            <person name="Sekowska A."/>
            <person name="Seror S.J."/>
            <person name="Serror P."/>
            <person name="Shin B.-S."/>
            <person name="Soldo B."/>
            <person name="Sorokin A."/>
            <person name="Tacconi E."/>
            <person name="Takagi T."/>
            <person name="Takahashi H."/>
            <person name="Takemaru K."/>
            <person name="Takeuchi M."/>
            <person name="Tamakoshi A."/>
            <person name="Tanaka T."/>
            <person name="Terpstra P."/>
            <person name="Tognoni A."/>
            <person name="Tosato V."/>
            <person name="Uchiyama S."/>
            <person name="Vandenbol M."/>
            <person name="Vannier F."/>
            <person name="Vassarotti A."/>
            <person name="Viari A."/>
            <person name="Wambutt R."/>
            <person name="Wedler E."/>
            <person name="Wedler H."/>
            <person name="Weitzenegger T."/>
            <person name="Winters P."/>
            <person name="Wipat A."/>
            <person name="Yamamoto H."/>
            <person name="Yamane K."/>
            <person name="Yasumoto K."/>
            <person name="Yata K."/>
            <person name="Yoshida K."/>
            <person name="Yoshikawa H.-F."/>
            <person name="Zumstein E."/>
            <person name="Yoshikawa H."/>
            <person name="Danchin A."/>
        </authorList>
    </citation>
    <scope>NUCLEOTIDE SEQUENCE [LARGE SCALE GENOMIC DNA]</scope>
    <source>
        <strain>168</strain>
    </source>
</reference>
<reference key="3">
    <citation type="journal article" date="2003" name="Mol. Microbiol.">
        <title>Genes controlled by the essential YycG/YycF two-component system of Bacillus subtilis revealed through a novel hybrid regulator approach.</title>
        <authorList>
            <person name="Howell A."/>
            <person name="Dubrac S."/>
            <person name="Andersen K.K."/>
            <person name="Noone D."/>
            <person name="Fert J."/>
            <person name="Msadek T."/>
            <person name="Devine K."/>
        </authorList>
    </citation>
    <scope>REGULATION BY WALR/WALK</scope>
</reference>
<reference key="4">
    <citation type="journal article" date="2005" name="J. Biol. Chem.">
        <title>The TagB protein in Bacillus subtilis 168 is an intracellular peripheral membrane protein that can incorporate glycerol phosphate onto a membrane-bound acceptor in vitro.</title>
        <authorList>
            <person name="Bhavsar A.P."/>
            <person name="Truant R."/>
            <person name="Brown E.D."/>
        </authorList>
    </citation>
    <scope>FUNCTION</scope>
    <scope>CATALYTIC ACTIVITY</scope>
    <scope>SUBCELLULAR LOCATION</scope>
    <scope>MUTAGENESIS OF HIS-126</scope>
</reference>
<reference key="5">
    <citation type="journal article" date="2006" name="ACS Chem. Biol.">
        <title>In vitro reconstitution of two essential steps in wall teichoic acid biosynthesis.</title>
        <authorList>
            <person name="Ginsberg C."/>
            <person name="Zhang Y.H."/>
            <person name="Yuan Y."/>
            <person name="Walker S."/>
        </authorList>
    </citation>
    <scope>CATALYTIC ACTIVITY</scope>
</reference>
<reference key="6">
    <citation type="journal article" date="2007" name="J. Bacteriol.">
        <title>The amino terminus of Bacillus subtilis TagB possesses separable localization and functional properties.</title>
        <authorList>
            <person name="Bhavsar A.P."/>
            <person name="D'Elia M.A."/>
            <person name="Sahakian T.D."/>
            <person name="Brown E.D."/>
        </authorList>
    </citation>
    <scope>SUBCELLULAR LOCATION</scope>
</reference>
<gene>
    <name type="primary">tagB</name>
    <name type="ordered locus">BSU35760</name>
</gene>
<protein>
    <recommendedName>
        <fullName evidence="5">Teichoic acid glycerol-phosphate primase</fullName>
        <ecNumber evidence="1 2">2.7.8.44</ecNumber>
    </recommendedName>
    <alternativeName>
        <fullName evidence="4">CDP-glycerol:N-acetyl-beta-D-mannosaminyl-1,4-N-acetyl-D-glucosaminyldiphosphoundecaprenyl glycerophosphotransferase</fullName>
    </alternativeName>
    <alternativeName>
        <fullName>CDP-glycerol:glycerophosphate glycerophosphotransferase</fullName>
    </alternativeName>
    <alternativeName>
        <fullName>Major teichoic acid biosynthesis protein B</fullName>
    </alternativeName>
    <alternativeName>
        <fullName evidence="4">Tag primase</fullName>
    </alternativeName>
</protein>
<feature type="chain" id="PRO_0000208447" description="Teichoic acid glycerol-phosphate primase">
    <location>
        <begin position="1"/>
        <end position="381"/>
    </location>
</feature>
<feature type="mutagenesis site" description="Looses 75% of activity." evidence="1">
    <original>H</original>
    <variation>A</variation>
    <location>
        <position position="126"/>
    </location>
</feature>
<dbReference type="EC" id="2.7.8.44" evidence="1 2"/>
<dbReference type="EMBL" id="M57497">
    <property type="protein sequence ID" value="AAA22845.1"/>
    <property type="molecule type" value="Genomic_DNA"/>
</dbReference>
<dbReference type="EMBL" id="AL009126">
    <property type="protein sequence ID" value="CAB15593.1"/>
    <property type="molecule type" value="Genomic_DNA"/>
</dbReference>
<dbReference type="PIR" id="C49757">
    <property type="entry name" value="C49757"/>
</dbReference>
<dbReference type="RefSeq" id="NP_391457.1">
    <property type="nucleotide sequence ID" value="NC_000964.3"/>
</dbReference>
<dbReference type="RefSeq" id="WP_009968271.1">
    <property type="nucleotide sequence ID" value="NZ_OZ025638.1"/>
</dbReference>
<dbReference type="SMR" id="P27621"/>
<dbReference type="FunCoup" id="P27621">
    <property type="interactions" value="28"/>
</dbReference>
<dbReference type="IntAct" id="P27621">
    <property type="interactions" value="6"/>
</dbReference>
<dbReference type="STRING" id="224308.BSU35760"/>
<dbReference type="PaxDb" id="224308-BSU35760"/>
<dbReference type="EnsemblBacteria" id="CAB15593">
    <property type="protein sequence ID" value="CAB15593"/>
    <property type="gene ID" value="BSU_35760"/>
</dbReference>
<dbReference type="GeneID" id="936813"/>
<dbReference type="KEGG" id="bsu:BSU35760"/>
<dbReference type="PATRIC" id="fig|224308.179.peg.3871"/>
<dbReference type="eggNOG" id="COG1887">
    <property type="taxonomic scope" value="Bacteria"/>
</dbReference>
<dbReference type="InParanoid" id="P27621"/>
<dbReference type="OrthoDB" id="9811865at2"/>
<dbReference type="PhylomeDB" id="P27621"/>
<dbReference type="BioCyc" id="BSUB:BSU35760-MONOMER"/>
<dbReference type="BioCyc" id="MetaCyc:BSU35760-MONOMER"/>
<dbReference type="BRENDA" id="2.7.8.44">
    <property type="organism ID" value="658"/>
</dbReference>
<dbReference type="UniPathway" id="UPA00827"/>
<dbReference type="Proteomes" id="UP000001570">
    <property type="component" value="Chromosome"/>
</dbReference>
<dbReference type="GO" id="GO:0005886">
    <property type="term" value="C:plasma membrane"/>
    <property type="evidence" value="ECO:0007669"/>
    <property type="project" value="UniProtKB-SubCell"/>
</dbReference>
<dbReference type="GO" id="GO:0047355">
    <property type="term" value="F:CDP-glycerol glycerophosphotransferase activity"/>
    <property type="evidence" value="ECO:0007669"/>
    <property type="project" value="InterPro"/>
</dbReference>
<dbReference type="GO" id="GO:0071555">
    <property type="term" value="P:cell wall organization"/>
    <property type="evidence" value="ECO:0007669"/>
    <property type="project" value="UniProtKB-KW"/>
</dbReference>
<dbReference type="GO" id="GO:0019350">
    <property type="term" value="P:teichoic acid biosynthetic process"/>
    <property type="evidence" value="ECO:0007669"/>
    <property type="project" value="UniProtKB-KW"/>
</dbReference>
<dbReference type="Gene3D" id="3.40.50.11820">
    <property type="match status" value="1"/>
</dbReference>
<dbReference type="Gene3D" id="3.40.50.12580">
    <property type="match status" value="1"/>
</dbReference>
<dbReference type="InterPro" id="IPR007554">
    <property type="entry name" value="Glycerophosphate_synth"/>
</dbReference>
<dbReference type="InterPro" id="IPR043148">
    <property type="entry name" value="TagF_C"/>
</dbReference>
<dbReference type="InterPro" id="IPR043149">
    <property type="entry name" value="TagF_N"/>
</dbReference>
<dbReference type="InterPro" id="IPR051612">
    <property type="entry name" value="Teichoic_Acid_Biosynth"/>
</dbReference>
<dbReference type="PANTHER" id="PTHR37316">
    <property type="entry name" value="TEICHOIC ACID GLYCEROL-PHOSPHATE PRIMASE"/>
    <property type="match status" value="1"/>
</dbReference>
<dbReference type="PANTHER" id="PTHR37316:SF1">
    <property type="entry name" value="TEICHOIC ACID GLYCEROL-PHOSPHATE PRIMASE"/>
    <property type="match status" value="1"/>
</dbReference>
<dbReference type="Pfam" id="PF04464">
    <property type="entry name" value="Glyphos_transf"/>
    <property type="match status" value="1"/>
</dbReference>
<dbReference type="SUPFAM" id="SSF53756">
    <property type="entry name" value="UDP-Glycosyltransferase/glycogen phosphorylase"/>
    <property type="match status" value="1"/>
</dbReference>
<proteinExistence type="evidence at protein level"/>
<accession>P27621</accession>
<evidence type="ECO:0000269" key="1">
    <source>
    </source>
</evidence>
<evidence type="ECO:0000269" key="2">
    <source>
    </source>
</evidence>
<evidence type="ECO:0000269" key="3">
    <source>
    </source>
</evidence>
<evidence type="ECO:0000303" key="4">
    <source>
    </source>
</evidence>
<evidence type="ECO:0000305" key="5"/>
<sequence length="381" mass="44554">MKIRSLLANCYLYFLSAIAFFLQWVKPESKVTLLISFEANAKAILEEYEQGQYSYKLNILYTQQASAIAESFPNVDAYLLQEKNPIHLIKAVYLMFNSKVIITDNYFLLTSVLNKRKQTKCIQVWHANGSLKKFGLEDITNMQRTKTDIKRFQKVYSSYDYLTVGSEEMANIFKKSFGIKDNQLLKIGVPLTDPYYRENKKKISDTLNIQRKKIILYAPTFRDYNMQSIQLPFTEEQLIHQLKEEYVLFVKLHPAIQNNIDIKYSSDYIKDVSNYALFDLLMAADILITDYSSVPFEFSILNKPILFYTYDLKLYQQKRGLVDNYLSIIPGRACYDSESLINEIQTPFNYSKIKVFSDRWNKYSDGNSSQNLLNFIENLIS</sequence>
<comment type="function">
    <text evidence="1">Catalyzes the addition of a single glycerol phosphate residue to the prenoldiphosphate-linked disaccharide, as a primer for polymerisation by TagF.</text>
</comment>
<comment type="catalytic activity">
    <reaction evidence="1 2">
        <text>N-acetyl-beta-D-mannosaminyl-(1-&gt;4)-N-acetyl-alpha-D-glucosaminyl di-trans,octa-cis-undecaprenyl diphosphate + CDP-glycerol = 4-O-[(2R)-glycerylphospho]-N-acetyl-beta-D-mannosaminyl-(1-&gt;4)-N-acetyl-alpha-D-glucosaminyl di-trans,octa-cis-undecaprenyl diphosphate + CMP + H(+)</text>
        <dbReference type="Rhea" id="RHEA:33815"/>
        <dbReference type="ChEBI" id="CHEBI:15378"/>
        <dbReference type="ChEBI" id="CHEBI:58311"/>
        <dbReference type="ChEBI" id="CHEBI:60377"/>
        <dbReference type="ChEBI" id="CHEBI:132210"/>
        <dbReference type="ChEBI" id="CHEBI:132211"/>
        <dbReference type="EC" id="2.7.8.44"/>
    </reaction>
</comment>
<comment type="pathway">
    <text>Cell wall biogenesis; poly(glycerol phosphate) teichoic acid biosynthesis.</text>
</comment>
<comment type="interaction">
    <interactant intactId="EBI-6401730">
        <id>P27621</id>
    </interactant>
    <interactant intactId="EBI-6401722">
        <id>P13485</id>
        <label>tagF</label>
    </interactant>
    <organismsDiffer>false</organismsDiffer>
    <experiments>3</experiments>
</comment>
<comment type="subcellular location">
    <subcellularLocation>
        <location evidence="1 3">Cell membrane</location>
        <topology evidence="1 3">Peripheral membrane protein</topology>
        <orientation evidence="1 3">Cytoplasmic side</orientation>
    </subcellularLocation>
</comment>
<comment type="induction">
    <text>Positively regulated by WalR. Mainly expressed during exponential growth and rapidly shut off as cells enter the stationary phase.</text>
</comment>
<comment type="similarity">
    <text evidence="5">Belongs to the CDP-glycerol glycerophosphotransferase family.</text>
</comment>
<keyword id="KW-1003">Cell membrane</keyword>
<keyword id="KW-0961">Cell wall biogenesis/degradation</keyword>
<keyword id="KW-0472">Membrane</keyword>
<keyword id="KW-1185">Reference proteome</keyword>
<keyword id="KW-0777">Teichoic acid biosynthesis</keyword>
<keyword id="KW-0808">Transferase</keyword>